<feature type="chain" id="PRO_1000014169" description="Small ribosomal subunit protein uS7">
    <location>
        <begin position="1"/>
        <end position="156"/>
    </location>
</feature>
<sequence length="156" mass="17692">MRRRKAPVREVLPDPIYGNKVITKFINSLMYDGKKSTATTIMYGALEAIDKKGGEKKGIDIFNDAIENIKPLLEVKSRRVGGATYQVPVEVRPARQQALAIRWIISFARKRSERTMIDKLAAELLDAANSKGASFKKKEDTYKMAEANKAFAHYRW</sequence>
<evidence type="ECO:0000255" key="1">
    <source>
        <dbReference type="HAMAP-Rule" id="MF_00480"/>
    </source>
</evidence>
<evidence type="ECO:0000305" key="2"/>
<comment type="function">
    <text evidence="1">One of the primary rRNA binding proteins, it binds directly to 16S rRNA where it nucleates assembly of the head domain of the 30S subunit. Is located at the subunit interface close to the decoding center, probably blocks exit of the E-site tRNA.</text>
</comment>
<comment type="subunit">
    <text evidence="1">Part of the 30S ribosomal subunit. Contacts proteins S9 and S11.</text>
</comment>
<comment type="similarity">
    <text evidence="1">Belongs to the universal ribosomal protein uS7 family.</text>
</comment>
<accession>A7H4P6</accession>
<organism>
    <name type="scientific">Campylobacter jejuni subsp. doylei (strain ATCC BAA-1458 / RM4099 / 269.97)</name>
    <dbReference type="NCBI Taxonomy" id="360109"/>
    <lineage>
        <taxon>Bacteria</taxon>
        <taxon>Pseudomonadati</taxon>
        <taxon>Campylobacterota</taxon>
        <taxon>Epsilonproteobacteria</taxon>
        <taxon>Campylobacterales</taxon>
        <taxon>Campylobacteraceae</taxon>
        <taxon>Campylobacter</taxon>
    </lineage>
</organism>
<protein>
    <recommendedName>
        <fullName evidence="1">Small ribosomal subunit protein uS7</fullName>
    </recommendedName>
    <alternativeName>
        <fullName evidence="2">30S ribosomal protein S7</fullName>
    </alternativeName>
</protein>
<reference key="1">
    <citation type="submission" date="2007-07" db="EMBL/GenBank/DDBJ databases">
        <title>Complete genome sequence of Campylobacter jejuni subsp doylei 269.97 isolated from human blood.</title>
        <authorList>
            <person name="Fouts D.E."/>
            <person name="Mongodin E.F."/>
            <person name="Puiu D."/>
            <person name="Sebastian Y."/>
            <person name="Miller W.G."/>
            <person name="Mandrell R.E."/>
            <person name="Lastovica A.J."/>
            <person name="Nelson K.E."/>
        </authorList>
    </citation>
    <scope>NUCLEOTIDE SEQUENCE [LARGE SCALE GENOMIC DNA]</scope>
    <source>
        <strain>ATCC BAA-1458 / RM4099 / 269.97</strain>
    </source>
</reference>
<name>RS7_CAMJD</name>
<proteinExistence type="inferred from homology"/>
<gene>
    <name evidence="1" type="primary">rpsG</name>
    <name type="ordered locus">JJD26997_1443</name>
</gene>
<dbReference type="EMBL" id="CP000768">
    <property type="protein sequence ID" value="ABS43705.1"/>
    <property type="molecule type" value="Genomic_DNA"/>
</dbReference>
<dbReference type="SMR" id="A7H4P6"/>
<dbReference type="KEGG" id="cjd:JJD26997_1443"/>
<dbReference type="HOGENOM" id="CLU_072226_1_1_7"/>
<dbReference type="Proteomes" id="UP000002302">
    <property type="component" value="Chromosome"/>
</dbReference>
<dbReference type="GO" id="GO:0015935">
    <property type="term" value="C:small ribosomal subunit"/>
    <property type="evidence" value="ECO:0007669"/>
    <property type="project" value="InterPro"/>
</dbReference>
<dbReference type="GO" id="GO:0019843">
    <property type="term" value="F:rRNA binding"/>
    <property type="evidence" value="ECO:0007669"/>
    <property type="project" value="UniProtKB-UniRule"/>
</dbReference>
<dbReference type="GO" id="GO:0003735">
    <property type="term" value="F:structural constituent of ribosome"/>
    <property type="evidence" value="ECO:0007669"/>
    <property type="project" value="InterPro"/>
</dbReference>
<dbReference type="GO" id="GO:0000049">
    <property type="term" value="F:tRNA binding"/>
    <property type="evidence" value="ECO:0007669"/>
    <property type="project" value="UniProtKB-UniRule"/>
</dbReference>
<dbReference type="GO" id="GO:0006412">
    <property type="term" value="P:translation"/>
    <property type="evidence" value="ECO:0007669"/>
    <property type="project" value="UniProtKB-UniRule"/>
</dbReference>
<dbReference type="CDD" id="cd14869">
    <property type="entry name" value="uS7_Bacteria"/>
    <property type="match status" value="1"/>
</dbReference>
<dbReference type="FunFam" id="1.10.455.10:FF:000001">
    <property type="entry name" value="30S ribosomal protein S7"/>
    <property type="match status" value="1"/>
</dbReference>
<dbReference type="Gene3D" id="1.10.455.10">
    <property type="entry name" value="Ribosomal protein S7 domain"/>
    <property type="match status" value="1"/>
</dbReference>
<dbReference type="HAMAP" id="MF_00480_B">
    <property type="entry name" value="Ribosomal_uS7_B"/>
    <property type="match status" value="1"/>
</dbReference>
<dbReference type="InterPro" id="IPR000235">
    <property type="entry name" value="Ribosomal_uS7"/>
</dbReference>
<dbReference type="InterPro" id="IPR005717">
    <property type="entry name" value="Ribosomal_uS7_bac/org-type"/>
</dbReference>
<dbReference type="InterPro" id="IPR020606">
    <property type="entry name" value="Ribosomal_uS7_CS"/>
</dbReference>
<dbReference type="InterPro" id="IPR023798">
    <property type="entry name" value="Ribosomal_uS7_dom"/>
</dbReference>
<dbReference type="InterPro" id="IPR036823">
    <property type="entry name" value="Ribosomal_uS7_dom_sf"/>
</dbReference>
<dbReference type="NCBIfam" id="TIGR01029">
    <property type="entry name" value="rpsG_bact"/>
    <property type="match status" value="1"/>
</dbReference>
<dbReference type="PANTHER" id="PTHR11205">
    <property type="entry name" value="RIBOSOMAL PROTEIN S7"/>
    <property type="match status" value="1"/>
</dbReference>
<dbReference type="Pfam" id="PF00177">
    <property type="entry name" value="Ribosomal_S7"/>
    <property type="match status" value="1"/>
</dbReference>
<dbReference type="PIRSF" id="PIRSF002122">
    <property type="entry name" value="RPS7p_RPS7a_RPS5e_RPS7o"/>
    <property type="match status" value="1"/>
</dbReference>
<dbReference type="SUPFAM" id="SSF47973">
    <property type="entry name" value="Ribosomal protein S7"/>
    <property type="match status" value="1"/>
</dbReference>
<dbReference type="PROSITE" id="PS00052">
    <property type="entry name" value="RIBOSOMAL_S7"/>
    <property type="match status" value="1"/>
</dbReference>
<keyword id="KW-0687">Ribonucleoprotein</keyword>
<keyword id="KW-0689">Ribosomal protein</keyword>
<keyword id="KW-0694">RNA-binding</keyword>
<keyword id="KW-0699">rRNA-binding</keyword>
<keyword id="KW-0820">tRNA-binding</keyword>